<name>SDR1_SAPOF</name>
<sequence>MAEASSFLAQKRYAVVTGANKGLGLEICGQLASQGVTVLLTSRDEKRGLEAIEELKKSGINSENLEYHQLDVTKPASFASLADFIKAKFGKLDILVNNAGISGVIVDYAALMEAIRRRGAEINYDGVMKQTYELAEECLQTNYYGVKRTINALLPLLQFSDSPRIVNVSSDVGLLKKIPGERIREALGDVEKLTEESVDGILDEFLRDFKEGKIAEKGWPTFKSAYSISKAALNSYTRVLARKYPSIIINCVCPGVVKTDINLKMGHLTVEEGAASPVRLALMPLGSPSGLFYTRNEVTPFE</sequence>
<feature type="chain" id="PRO_0000462365" description="Short-chain dehydrogenase/reductase 1">
    <location>
        <begin position="1"/>
        <end position="302"/>
    </location>
</feature>
<feature type="active site" description="Proton acceptor" evidence="1">
    <location>
        <position position="226"/>
    </location>
</feature>
<feature type="binding site" evidence="1">
    <location>
        <begin position="20"/>
        <end position="23"/>
    </location>
    <ligand>
        <name>NADP(+)</name>
        <dbReference type="ChEBI" id="CHEBI:58349"/>
    </ligand>
</feature>
<feature type="binding site" evidence="1">
    <location>
        <position position="43"/>
    </location>
    <ligand>
        <name>NADP(+)</name>
        <dbReference type="ChEBI" id="CHEBI:58349"/>
    </ligand>
</feature>
<feature type="binding site" evidence="1">
    <location>
        <begin position="71"/>
        <end position="72"/>
    </location>
    <ligand>
        <name>NADP(+)</name>
        <dbReference type="ChEBI" id="CHEBI:58349"/>
    </ligand>
</feature>
<feature type="binding site" evidence="1">
    <location>
        <position position="98"/>
    </location>
    <ligand>
        <name>NADP(+)</name>
        <dbReference type="ChEBI" id="CHEBI:58349"/>
    </ligand>
</feature>
<feature type="binding site" evidence="1">
    <location>
        <position position="170"/>
    </location>
    <ligand>
        <name>substrate</name>
    </ligand>
</feature>
<feature type="binding site" evidence="1">
    <location>
        <position position="226"/>
    </location>
    <ligand>
        <name>NADP(+)</name>
        <dbReference type="ChEBI" id="CHEBI:58349"/>
    </ligand>
</feature>
<feature type="binding site" evidence="1">
    <location>
        <position position="230"/>
    </location>
    <ligand>
        <name>NADP(+)</name>
        <dbReference type="ChEBI" id="CHEBI:58349"/>
    </ligand>
</feature>
<feature type="binding site" evidence="1">
    <location>
        <begin position="257"/>
        <end position="262"/>
    </location>
    <ligand>
        <name>NADP(+)</name>
        <dbReference type="ChEBI" id="CHEBI:58349"/>
    </ligand>
</feature>
<comment type="function">
    <text evidence="2">Component of the oleanane-type triterpene saponins (e.g. saponarioside A and saponarioside B) biosynthetic pathway, leading to the production of natural products with detergent properties used as traditional sources of soap (PubMed:39043959). A dehydrogenase/reductase that, together with UGT74CD1, mediates the conversion of QA-tri to QA-triF; UGT74CD1 may transfer 4-keto-6-deoxy-glucose to QA-tri, which is in turn reduced to D-fucose by SDR1, thus leading to QA-triF formation via the initiation of the C-28 sugar chain (PubMed:39043959).</text>
</comment>
<comment type="pathway">
    <text evidence="2">Secondary metabolite biosynthesis; terpenoid biosynthesis.</text>
</comment>
<comment type="tissue specificity">
    <text evidence="2">Mainly expressed in flowers and flower buds, to a lesser extent in leaves and, at low levels, in stems and roots.</text>
</comment>
<comment type="biotechnology">
    <text evidence="3">Soapwort saponins possess anticancer properties and are also being explored as enhancers for endosomal escape in targeted tumor therapies (PubMed:39043959). They may also serve as precursors for vaccine adjuvants (PubMed:39043959).</text>
</comment>
<comment type="similarity">
    <text evidence="4">Belongs to the short-chain dehydrogenases/reductases (SDR) family.</text>
</comment>
<evidence type="ECO:0000250" key="1">
    <source>
        <dbReference type="UniProtKB" id="Q071N0"/>
    </source>
</evidence>
<evidence type="ECO:0000269" key="2">
    <source>
    </source>
</evidence>
<evidence type="ECO:0000303" key="3">
    <source>
    </source>
</evidence>
<evidence type="ECO:0000305" key="4"/>
<evidence type="ECO:0000312" key="5">
    <source>
        <dbReference type="EMBL" id="KAK9756605.1"/>
    </source>
</evidence>
<evidence type="ECO:0000312" key="6">
    <source>
        <dbReference type="EMBL" id="WWM48149.1"/>
    </source>
</evidence>
<keyword id="KW-0521">NADP</keyword>
<keyword id="KW-0560">Oxidoreductase</keyword>
<organism>
    <name type="scientific">Saponaria officinalis</name>
    <name type="common">Common soapwort</name>
    <name type="synonym">Lychnis saponaria</name>
    <dbReference type="NCBI Taxonomy" id="3572"/>
    <lineage>
        <taxon>Eukaryota</taxon>
        <taxon>Viridiplantae</taxon>
        <taxon>Streptophyta</taxon>
        <taxon>Embryophyta</taxon>
        <taxon>Tracheophyta</taxon>
        <taxon>Spermatophyta</taxon>
        <taxon>Magnoliopsida</taxon>
        <taxon>eudicotyledons</taxon>
        <taxon>Gunneridae</taxon>
        <taxon>Pentapetalae</taxon>
        <taxon>Caryophyllales</taxon>
        <taxon>Caryophyllaceae</taxon>
        <taxon>Caryophylleae</taxon>
        <taxon>Saponaria</taxon>
    </lineage>
</organism>
<proteinExistence type="evidence at protein level"/>
<reference evidence="6" key="1">
    <citation type="journal article" date="2025" name="Nat. Chem. Biol.">
        <title>Unlocking saponin biosynthesis in soapwort.</title>
        <authorList>
            <person name="Jo S."/>
            <person name="El-Demerdash A."/>
            <person name="Owen C."/>
            <person name="Srivastava V."/>
            <person name="Wu D."/>
            <person name="Kikuchi S."/>
            <person name="Reed J."/>
            <person name="Hodgson H."/>
            <person name="Harkess A."/>
            <person name="Shu S."/>
            <person name="Plott C."/>
            <person name="Jenkins J."/>
            <person name="Williams M."/>
            <person name="Boston L.-B."/>
            <person name="Lacchini E."/>
            <person name="Qu T."/>
            <person name="Goossens A."/>
            <person name="Grimwood J."/>
            <person name="Schmutz J."/>
            <person name="Leebens-Mack J."/>
            <person name="Osbourn A."/>
        </authorList>
    </citation>
    <scope>NUCLEOTIDE SEQUENCE [MRNA]</scope>
    <scope>FUNCTION</scope>
    <scope>CATALYTIC ACTIVITY</scope>
    <scope>TISSUE SPECIFICITY</scope>
    <scope>PATHWAY</scope>
    <scope>BIOTECHNOLOGY</scope>
</reference>
<reference evidence="5" key="2">
    <citation type="submission" date="2024-03" db="EMBL/GenBank/DDBJ databases">
        <title>WGS assembly of Saponaria officinalis var. Norfolk2.</title>
        <authorList>
            <person name="Jenkins J."/>
            <person name="Shu S."/>
            <person name="Grimwood J."/>
            <person name="Barry K."/>
            <person name="Goodstein D."/>
            <person name="Schmutz J."/>
            <person name="Leebens-Mack J."/>
            <person name="Osbourn A."/>
        </authorList>
    </citation>
    <scope>NUCLEOTIDE SEQUENCE [LARGE SCALE MRNA]</scope>
    <source>
        <strain>cv. Norfolk2</strain>
        <tissue>Leaf</tissue>
    </source>
</reference>
<dbReference type="EC" id="1.1.1.-" evidence="2"/>
<dbReference type="EMBL" id="OR426396">
    <property type="protein sequence ID" value="WWM48149.1"/>
    <property type="molecule type" value="mRNA"/>
</dbReference>
<dbReference type="EMBL" id="JBDFQZ010000001">
    <property type="protein sequence ID" value="KAK9756605.1"/>
    <property type="molecule type" value="Genomic_DNA"/>
</dbReference>
<dbReference type="UniPathway" id="UPA00213"/>
<dbReference type="Proteomes" id="UP001443914">
    <property type="component" value="Unassembled WGS sequence"/>
</dbReference>
<dbReference type="GO" id="GO:0016020">
    <property type="term" value="C:membrane"/>
    <property type="evidence" value="ECO:0007669"/>
    <property type="project" value="TreeGrafter"/>
</dbReference>
<dbReference type="GO" id="GO:0016491">
    <property type="term" value="F:oxidoreductase activity"/>
    <property type="evidence" value="ECO:0000314"/>
    <property type="project" value="UniProtKB"/>
</dbReference>
<dbReference type="GO" id="GO:0016616">
    <property type="term" value="F:oxidoreductase activity, acting on the CH-OH group of donors, NAD or NADP as acceptor"/>
    <property type="evidence" value="ECO:0007669"/>
    <property type="project" value="InterPro"/>
</dbReference>
<dbReference type="GO" id="GO:0016135">
    <property type="term" value="P:saponin biosynthetic process"/>
    <property type="evidence" value="ECO:0000314"/>
    <property type="project" value="UniProtKB"/>
</dbReference>
<dbReference type="GO" id="GO:0016104">
    <property type="term" value="P:triterpenoid biosynthetic process"/>
    <property type="evidence" value="ECO:0000314"/>
    <property type="project" value="UniProtKB"/>
</dbReference>
<dbReference type="CDD" id="cd05324">
    <property type="entry name" value="carb_red_PTCR-like_SDR_c"/>
    <property type="match status" value="1"/>
</dbReference>
<dbReference type="FunFam" id="3.40.50.720:FF:000312">
    <property type="entry name" value="(+)-neomenthol dehydrogenase"/>
    <property type="match status" value="1"/>
</dbReference>
<dbReference type="Gene3D" id="3.40.50.720">
    <property type="entry name" value="NAD(P)-binding Rossmann-like Domain"/>
    <property type="match status" value="1"/>
</dbReference>
<dbReference type="InterPro" id="IPR045313">
    <property type="entry name" value="CBR1-like"/>
</dbReference>
<dbReference type="InterPro" id="IPR036291">
    <property type="entry name" value="NAD(P)-bd_dom_sf"/>
</dbReference>
<dbReference type="InterPro" id="IPR020904">
    <property type="entry name" value="Sc_DH/Rdtase_CS"/>
</dbReference>
<dbReference type="InterPro" id="IPR002347">
    <property type="entry name" value="SDR_fam"/>
</dbReference>
<dbReference type="PANTHER" id="PTHR43490">
    <property type="entry name" value="(+)-NEOMENTHOL DEHYDROGENASE"/>
    <property type="match status" value="1"/>
</dbReference>
<dbReference type="PANTHER" id="PTHR43490:SF98">
    <property type="entry name" value="OS02G0640600 PROTEIN"/>
    <property type="match status" value="1"/>
</dbReference>
<dbReference type="Pfam" id="PF00106">
    <property type="entry name" value="adh_short"/>
    <property type="match status" value="1"/>
</dbReference>
<dbReference type="Pfam" id="PF13561">
    <property type="entry name" value="adh_short_C2"/>
    <property type="match status" value="1"/>
</dbReference>
<dbReference type="PRINTS" id="PR00081">
    <property type="entry name" value="GDHRDH"/>
</dbReference>
<dbReference type="PRINTS" id="PR00080">
    <property type="entry name" value="SDRFAMILY"/>
</dbReference>
<dbReference type="SUPFAM" id="SSF51735">
    <property type="entry name" value="NAD(P)-binding Rossmann-fold domains"/>
    <property type="match status" value="1"/>
</dbReference>
<dbReference type="PROSITE" id="PS00061">
    <property type="entry name" value="ADH_SHORT"/>
    <property type="match status" value="1"/>
</dbReference>
<accession>A0AAW1NHX6</accession>
<protein>
    <recommendedName>
        <fullName evidence="3">Short-chain dehydrogenase/reductase 1</fullName>
        <shortName evidence="3">SoSDR1</shortName>
        <ecNumber evidence="2">1.1.1.-</ecNumber>
    </recommendedName>
</protein>
<gene>
    <name evidence="3" type="primary">SDR1</name>
    <name evidence="3" type="synonym">Saoffv11002756m</name>
    <name evidence="5" type="ORF">RND81_01G108800</name>
</gene>